<organism>
    <name type="scientific">Laticauda crockeri</name>
    <name type="common">Crocker's sea snake</name>
    <name type="synonym">Rennell Island sea krait</name>
    <dbReference type="NCBI Taxonomy" id="8629"/>
    <lineage>
        <taxon>Eukaryota</taxon>
        <taxon>Metazoa</taxon>
        <taxon>Chordata</taxon>
        <taxon>Craniata</taxon>
        <taxon>Vertebrata</taxon>
        <taxon>Euteleostomi</taxon>
        <taxon>Lepidosauria</taxon>
        <taxon>Squamata</taxon>
        <taxon>Bifurcata</taxon>
        <taxon>Unidentata</taxon>
        <taxon>Episquamata</taxon>
        <taxon>Toxicofera</taxon>
        <taxon>Serpentes</taxon>
        <taxon>Colubroidea</taxon>
        <taxon>Elapidae</taxon>
        <taxon>Laticaudinae</taxon>
        <taxon>Laticauda</taxon>
    </lineage>
</organism>
<name>3S1A_LATCR</name>
<protein>
    <recommendedName>
        <fullName>Short neurotoxin A</fullName>
    </recommendedName>
</protein>
<evidence type="ECO:0000250" key="1">
    <source>
        <dbReference type="UniProtKB" id="P0C1Z0"/>
    </source>
</evidence>
<evidence type="ECO:0000250" key="2">
    <source>
        <dbReference type="UniProtKB" id="P60775"/>
    </source>
</evidence>
<evidence type="ECO:0000256" key="3">
    <source>
        <dbReference type="SAM" id="MobiDB-lite"/>
    </source>
</evidence>
<evidence type="ECO:0000269" key="4">
    <source ref="1"/>
</evidence>
<evidence type="ECO:0000305" key="5"/>
<feature type="chain" id="PRO_0000093587" description="Short neurotoxin A" evidence="4">
    <location>
        <begin position="1"/>
        <end position="62"/>
    </location>
</feature>
<feature type="region of interest" description="Disordered" evidence="3">
    <location>
        <begin position="1"/>
        <end position="21"/>
    </location>
</feature>
<feature type="compositionally biased region" description="Polar residues" evidence="3">
    <location>
        <begin position="1"/>
        <end position="16"/>
    </location>
</feature>
<feature type="disulfide bond" evidence="1">
    <location>
        <begin position="3"/>
        <end position="24"/>
    </location>
</feature>
<feature type="disulfide bond" evidence="1">
    <location>
        <begin position="17"/>
        <end position="41"/>
    </location>
</feature>
<feature type="disulfide bond" evidence="1">
    <location>
        <begin position="43"/>
        <end position="54"/>
    </location>
</feature>
<feature type="disulfide bond" evidence="1">
    <location>
        <begin position="55"/>
        <end position="60"/>
    </location>
</feature>
<keyword id="KW-0008">Acetylcholine receptor inhibiting toxin</keyword>
<keyword id="KW-0903">Direct protein sequencing</keyword>
<keyword id="KW-1015">Disulfide bond</keyword>
<keyword id="KW-0872">Ion channel impairing toxin</keyword>
<keyword id="KW-0528">Neurotoxin</keyword>
<keyword id="KW-0629">Postsynaptic neurotoxin</keyword>
<keyword id="KW-0964">Secreted</keyword>
<keyword id="KW-0800">Toxin</keyword>
<sequence length="62" mass="7023">RRCFNHPSSQPQTNKSCPPGENSCYNKQWRDHRGTIIERGCGCPTVKPGIKLRCCQSDDCNN</sequence>
<reference key="1">
    <citation type="journal article" date="1983" name="Toxicon 21 Suppl.">
        <title>Neurotoxins of sea snakes genus Laticauda.</title>
        <authorList>
            <person name="Tamiya N."/>
            <person name="Sato A."/>
            <person name="Kim H.S."/>
            <person name="Teruuchi T."/>
            <person name="Takasaki C."/>
            <person name="Ishikawa Y."/>
            <person name="Guinea M.L."/>
            <person name="McCoy M."/>
            <person name="Heatwole H."/>
            <person name="Cogger H.G."/>
        </authorList>
    </citation>
    <scope>PROTEIN SEQUENCE</scope>
    <scope>SUBCELLULAR LOCATION</scope>
    <source>
        <tissue>Venom</tissue>
    </source>
</reference>
<proteinExistence type="evidence at protein level"/>
<dbReference type="SMR" id="P25495"/>
<dbReference type="GO" id="GO:0005576">
    <property type="term" value="C:extracellular region"/>
    <property type="evidence" value="ECO:0007669"/>
    <property type="project" value="UniProtKB-SubCell"/>
</dbReference>
<dbReference type="GO" id="GO:0030550">
    <property type="term" value="F:acetylcholine receptor inhibitor activity"/>
    <property type="evidence" value="ECO:0007669"/>
    <property type="project" value="UniProtKB-KW"/>
</dbReference>
<dbReference type="GO" id="GO:0099106">
    <property type="term" value="F:ion channel regulator activity"/>
    <property type="evidence" value="ECO:0007669"/>
    <property type="project" value="UniProtKB-KW"/>
</dbReference>
<dbReference type="GO" id="GO:0090729">
    <property type="term" value="F:toxin activity"/>
    <property type="evidence" value="ECO:0007669"/>
    <property type="project" value="UniProtKB-KW"/>
</dbReference>
<dbReference type="CDD" id="cd00206">
    <property type="entry name" value="TFP_snake_toxin"/>
    <property type="match status" value="1"/>
</dbReference>
<dbReference type="FunFam" id="2.10.60.10:FF:000024">
    <property type="entry name" value="Cytotoxin 1"/>
    <property type="match status" value="1"/>
</dbReference>
<dbReference type="Gene3D" id="2.10.60.10">
    <property type="entry name" value="CD59"/>
    <property type="match status" value="1"/>
</dbReference>
<dbReference type="InterPro" id="IPR003571">
    <property type="entry name" value="Snake_3FTx"/>
</dbReference>
<dbReference type="InterPro" id="IPR045860">
    <property type="entry name" value="Snake_toxin-like_sf"/>
</dbReference>
<dbReference type="InterPro" id="IPR018354">
    <property type="entry name" value="Snake_toxin_con_site"/>
</dbReference>
<dbReference type="InterPro" id="IPR054131">
    <property type="entry name" value="Toxin_cobra-type"/>
</dbReference>
<dbReference type="Pfam" id="PF21947">
    <property type="entry name" value="Toxin_cobra-type"/>
    <property type="match status" value="1"/>
</dbReference>
<dbReference type="SUPFAM" id="SSF57302">
    <property type="entry name" value="Snake toxin-like"/>
    <property type="match status" value="1"/>
</dbReference>
<dbReference type="PROSITE" id="PS00272">
    <property type="entry name" value="SNAKE_TOXIN"/>
    <property type="match status" value="1"/>
</dbReference>
<comment type="function">
    <text evidence="2">Binds to muscle nicotinic acetylcholine receptor (nAChR) and inhibit acetylcholine from binding to the receptor, thereby impairing neuromuscular transmission.</text>
</comment>
<comment type="subcellular location">
    <subcellularLocation>
        <location evidence="4">Secreted</location>
    </subcellularLocation>
</comment>
<comment type="tissue specificity">
    <text evidence="5">Expressed by the venom gland.</text>
</comment>
<comment type="similarity">
    <text evidence="5">Belongs to the three-finger toxin family. Short-chain subfamily. Type I alpha-neurotoxin sub-subfamily.</text>
</comment>
<accession>P25495</accession>